<comment type="function">
    <text>May play a role in the correct development and proper functioning of the peripheral and central nervous system and be involved in cell adhesion and intercellular communication.</text>
</comment>
<comment type="subcellular location">
    <subcellularLocation>
        <location evidence="7">Membrane</location>
        <topology evidence="7">Single-pass type I membrane protein</topology>
    </subcellularLocation>
</comment>
<comment type="similarity">
    <text evidence="7">Belongs to the neurexin family.</text>
</comment>
<reference key="1">
    <citation type="journal article" date="2004" name="Nature">
        <title>Genome sequence of the Brown Norway rat yields insights into mammalian evolution.</title>
        <authorList>
            <person name="Gibbs R.A."/>
            <person name="Weinstock G.M."/>
            <person name="Metzker M.L."/>
            <person name="Muzny D.M."/>
            <person name="Sodergren E.J."/>
            <person name="Scherer S."/>
            <person name="Scott G."/>
            <person name="Steffen D."/>
            <person name="Worley K.C."/>
            <person name="Burch P.E."/>
            <person name="Okwuonu G."/>
            <person name="Hines S."/>
            <person name="Lewis L."/>
            <person name="Deramo C."/>
            <person name="Delgado O."/>
            <person name="Dugan-Rocha S."/>
            <person name="Miner G."/>
            <person name="Morgan M."/>
            <person name="Hawes A."/>
            <person name="Gill R."/>
            <person name="Holt R.A."/>
            <person name="Adams M.D."/>
            <person name="Amanatides P.G."/>
            <person name="Baden-Tillson H."/>
            <person name="Barnstead M."/>
            <person name="Chin S."/>
            <person name="Evans C.A."/>
            <person name="Ferriera S."/>
            <person name="Fosler C."/>
            <person name="Glodek A."/>
            <person name="Gu Z."/>
            <person name="Jennings D."/>
            <person name="Kraft C.L."/>
            <person name="Nguyen T."/>
            <person name="Pfannkoch C.M."/>
            <person name="Sitter C."/>
            <person name="Sutton G.G."/>
            <person name="Venter J.C."/>
            <person name="Woodage T."/>
            <person name="Smith D."/>
            <person name="Lee H.-M."/>
            <person name="Gustafson E."/>
            <person name="Cahill P."/>
            <person name="Kana A."/>
            <person name="Doucette-Stamm L."/>
            <person name="Weinstock K."/>
            <person name="Fechtel K."/>
            <person name="Weiss R.B."/>
            <person name="Dunn D.M."/>
            <person name="Green E.D."/>
            <person name="Blakesley R.W."/>
            <person name="Bouffard G.G."/>
            <person name="De Jong P.J."/>
            <person name="Osoegawa K."/>
            <person name="Zhu B."/>
            <person name="Marra M."/>
            <person name="Schein J."/>
            <person name="Bosdet I."/>
            <person name="Fjell C."/>
            <person name="Jones S."/>
            <person name="Krzywinski M."/>
            <person name="Mathewson C."/>
            <person name="Siddiqui A."/>
            <person name="Wye N."/>
            <person name="McPherson J."/>
            <person name="Zhao S."/>
            <person name="Fraser C.M."/>
            <person name="Shetty J."/>
            <person name="Shatsman S."/>
            <person name="Geer K."/>
            <person name="Chen Y."/>
            <person name="Abramzon S."/>
            <person name="Nierman W.C."/>
            <person name="Havlak P.H."/>
            <person name="Chen R."/>
            <person name="Durbin K.J."/>
            <person name="Egan A."/>
            <person name="Ren Y."/>
            <person name="Song X.-Z."/>
            <person name="Li B."/>
            <person name="Liu Y."/>
            <person name="Qin X."/>
            <person name="Cawley S."/>
            <person name="Cooney A.J."/>
            <person name="D'Souza L.M."/>
            <person name="Martin K."/>
            <person name="Wu J.Q."/>
            <person name="Gonzalez-Garay M.L."/>
            <person name="Jackson A.R."/>
            <person name="Kalafus K.J."/>
            <person name="McLeod M.P."/>
            <person name="Milosavljevic A."/>
            <person name="Virk D."/>
            <person name="Volkov A."/>
            <person name="Wheeler D.A."/>
            <person name="Zhang Z."/>
            <person name="Bailey J.A."/>
            <person name="Eichler E.E."/>
            <person name="Tuzun E."/>
            <person name="Birney E."/>
            <person name="Mongin E."/>
            <person name="Ureta-Vidal A."/>
            <person name="Woodwark C."/>
            <person name="Zdobnov E."/>
            <person name="Bork P."/>
            <person name="Suyama M."/>
            <person name="Torrents D."/>
            <person name="Alexandersson M."/>
            <person name="Trask B.J."/>
            <person name="Young J.M."/>
            <person name="Huang H."/>
            <person name="Wang H."/>
            <person name="Xing H."/>
            <person name="Daniels S."/>
            <person name="Gietzen D."/>
            <person name="Schmidt J."/>
            <person name="Stevens K."/>
            <person name="Vitt U."/>
            <person name="Wingrove J."/>
            <person name="Camara F."/>
            <person name="Mar Alba M."/>
            <person name="Abril J.F."/>
            <person name="Guigo R."/>
            <person name="Smit A."/>
            <person name="Dubchak I."/>
            <person name="Rubin E.M."/>
            <person name="Couronne O."/>
            <person name="Poliakov A."/>
            <person name="Huebner N."/>
            <person name="Ganten D."/>
            <person name="Goesele C."/>
            <person name="Hummel O."/>
            <person name="Kreitler T."/>
            <person name="Lee Y.-A."/>
            <person name="Monti J."/>
            <person name="Schulz H."/>
            <person name="Zimdahl H."/>
            <person name="Himmelbauer H."/>
            <person name="Lehrach H."/>
            <person name="Jacob H.J."/>
            <person name="Bromberg S."/>
            <person name="Gullings-Handley J."/>
            <person name="Jensen-Seaman M.I."/>
            <person name="Kwitek A.E."/>
            <person name="Lazar J."/>
            <person name="Pasko D."/>
            <person name="Tonellato P.J."/>
            <person name="Twigger S."/>
            <person name="Ponting C.P."/>
            <person name="Duarte J.M."/>
            <person name="Rice S."/>
            <person name="Goodstadt L."/>
            <person name="Beatson S.A."/>
            <person name="Emes R.D."/>
            <person name="Winter E.E."/>
            <person name="Webber C."/>
            <person name="Brandt P."/>
            <person name="Nyakatura G."/>
            <person name="Adetobi M."/>
            <person name="Chiaromonte F."/>
            <person name="Elnitski L."/>
            <person name="Eswara P."/>
            <person name="Hardison R.C."/>
            <person name="Hou M."/>
            <person name="Kolbe D."/>
            <person name="Makova K."/>
            <person name="Miller W."/>
            <person name="Nekrutenko A."/>
            <person name="Riemer C."/>
            <person name="Schwartz S."/>
            <person name="Taylor J."/>
            <person name="Yang S."/>
            <person name="Zhang Y."/>
            <person name="Lindpaintner K."/>
            <person name="Andrews T.D."/>
            <person name="Caccamo M."/>
            <person name="Clamp M."/>
            <person name="Clarke L."/>
            <person name="Curwen V."/>
            <person name="Durbin R.M."/>
            <person name="Eyras E."/>
            <person name="Searle S.M."/>
            <person name="Cooper G.M."/>
            <person name="Batzoglou S."/>
            <person name="Brudno M."/>
            <person name="Sidow A."/>
            <person name="Stone E.A."/>
            <person name="Payseur B.A."/>
            <person name="Bourque G."/>
            <person name="Lopez-Otin C."/>
            <person name="Puente X.S."/>
            <person name="Chakrabarti K."/>
            <person name="Chatterji S."/>
            <person name="Dewey C."/>
            <person name="Pachter L."/>
            <person name="Bray N."/>
            <person name="Yap V.B."/>
            <person name="Caspi A."/>
            <person name="Tesler G."/>
            <person name="Pevzner P.A."/>
            <person name="Haussler D."/>
            <person name="Roskin K.M."/>
            <person name="Baertsch R."/>
            <person name="Clawson H."/>
            <person name="Furey T.S."/>
            <person name="Hinrichs A.S."/>
            <person name="Karolchik D."/>
            <person name="Kent W.J."/>
            <person name="Rosenbloom K.R."/>
            <person name="Trumbower H."/>
            <person name="Weirauch M."/>
            <person name="Cooper D.N."/>
            <person name="Stenson P.D."/>
            <person name="Ma B."/>
            <person name="Brent M."/>
            <person name="Arumugam M."/>
            <person name="Shteynberg D."/>
            <person name="Copley R.R."/>
            <person name="Taylor M.S."/>
            <person name="Riethman H."/>
            <person name="Mudunuri U."/>
            <person name="Peterson J."/>
            <person name="Guyer M."/>
            <person name="Felsenfeld A."/>
            <person name="Old S."/>
            <person name="Mockrin S."/>
            <person name="Collins F.S."/>
        </authorList>
    </citation>
    <scope>NUCLEOTIDE SEQUENCE [LARGE SCALE GENOMIC DNA]</scope>
    <source>
        <strain>Brown Norway</strain>
    </source>
</reference>
<reference key="2">
    <citation type="journal article" date="2006" name="Mamm. Genome">
        <title>New members of the neurexin superfamily: multiple rodent homologues of the human CASPR5 gene.</title>
        <authorList>
            <person name="Traut W."/>
            <person name="Weichenhan D."/>
            <person name="Himmelbauer H."/>
            <person name="Winking H."/>
        </authorList>
    </citation>
    <scope>IDENTIFICATION</scope>
</reference>
<sequence length="1307" mass="145719">MDFVPRLNSVLTLVLSGLWHFGLTATNCDNCDDPLASFLSLRAFSSSSDVTGSSSPAHLNWRMGTGGWSPAYSNAQQWLQIDLGNRVEITAVATQGRYGSSDWVTSYRLMFSDTGHNWQEYKQEDNIWTFVGNMNADSVVHHKLLHSVRARFVRFVPLKWNPDGKIGMRMEVYGCSYRSDVADFDGHSSLLYRFNQKTMSTLKDMISLKFKSMQGDGVLLHGEGQRGDYITLELQNGRLALYLNLDGGQARLSSIAPSAILGSLLDDQQWHSVLLERVGKQTNFTVDTNTEHFQIKAETDALDIDYELSFGGIPIPSKPGTFLKKSFHGCIENLYYNGVNIIDLAKRRKHQIYSGNVTFSCSEPQIVPITFVNSRSSYLLLPGTPRIDGLSVSFQFRTWNEDGLLLSTELSESSGTLLLILEGGTLRLLIKKVAGHGTEIITGSGLNDGLWHFVSINARRNRVTLTLDNDAASLPPDISWLQIYSGNSYYFGGCPDNLTDSQCLNPIKAFQGCMRLIFIDNQPKDLISVQQGSLGNFSDLHIDLCSIKDRCLPNYCEHGGHCVQTWTTFYCNCSNTGYTGATCHDSIYEQSCEVYRHRGNNTSGFFFVDSDGSGPLEPLQLYCNITEDKIWMTIQHNITELTQVQGSNAEKPYSMTLNYGGSMDQLVALIDGSEYCEQEVTYHCRRSRLLNTPDGAPFTWWIGRSNEKHHYWGGSVPGIQKCGCGLEQSCLDIGHFCNCDADTDEWANDTGFLSFKDHLPVTQIIITDTNRSNSEAAWRIGPLRCYGDRHFWNAVSFSTEASYLHFPTSHVEFSIDISFFFKTTALSGVFIENLGIKDFLRLELSSPSEVTFAIDVGNGPTELLVQSPSPLNDNQWHYIQAERNLKETSLQVDNFPRIMRETTEKGHFQLQLNSQMFVGGTSSRQKGFLGCIRSLHLNGQNIDLEERGMVTSGVRPGCPGHCSSYGNNCHNGGKCVEKHNSYSCDCTKSPYEGPFCQKEISALFDSTTSITYMFQEPYPVSKNTSTSSSAIYTDTVLSKETILLSFVTAQAPTLLLYLNFSTPSFLALLLSRNGSLQILYHLSKGESHMFTVSTENLANRRVHHVKMNRDGTELSIQMDQQLFSYNFPLEAEFLTVRSLILGKVTETLGLDPRVARANSLGFIGCLSSVQYNHIAPLKAALRHASIAPATVQGSLREFSCGSMVDSDVNAVTTVYSSSDPFGKTDDHDPLTNAVLSDSAVIGGVIAVVTFITFCVIGIMTRFLYQHKQSHCTSQKKEKEYSENLDSSFRHDIDLQSTTSKCKREYFI</sequence>
<dbReference type="EMBL" id="AABR03084915">
    <property type="status" value="NOT_ANNOTATED_CDS"/>
    <property type="molecule type" value="Genomic_DNA"/>
</dbReference>
<dbReference type="EMBL" id="AABR03084985">
    <property type="status" value="NOT_ANNOTATED_CDS"/>
    <property type="molecule type" value="Genomic_DNA"/>
</dbReference>
<dbReference type="EMBL" id="AABR03085159">
    <property type="status" value="NOT_ANNOTATED_CDS"/>
    <property type="molecule type" value="Genomic_DNA"/>
</dbReference>
<dbReference type="EMBL" id="AABR03085253">
    <property type="status" value="NOT_ANNOTATED_CDS"/>
    <property type="molecule type" value="Genomic_DNA"/>
</dbReference>
<dbReference type="EMBL" id="AABR03085581">
    <property type="status" value="NOT_ANNOTATED_CDS"/>
    <property type="molecule type" value="Genomic_DNA"/>
</dbReference>
<dbReference type="EMBL" id="AABR03085657">
    <property type="status" value="NOT_ANNOTATED_CDS"/>
    <property type="molecule type" value="Genomic_DNA"/>
</dbReference>
<dbReference type="EMBL" id="AABR03085682">
    <property type="status" value="NOT_ANNOTATED_CDS"/>
    <property type="molecule type" value="Genomic_DNA"/>
</dbReference>
<dbReference type="EMBL" id="AABR03085702">
    <property type="status" value="NOT_ANNOTATED_CDS"/>
    <property type="molecule type" value="Genomic_DNA"/>
</dbReference>
<dbReference type="EMBL" id="AABR03086240">
    <property type="status" value="NOT_ANNOTATED_CDS"/>
    <property type="molecule type" value="Genomic_DNA"/>
</dbReference>
<dbReference type="EMBL" id="AABR03086399">
    <property type="status" value="NOT_ANNOTATED_CDS"/>
    <property type="molecule type" value="Genomic_DNA"/>
</dbReference>
<dbReference type="EMBL" id="AABR03086675">
    <property type="status" value="NOT_ANNOTATED_CDS"/>
    <property type="molecule type" value="Genomic_DNA"/>
</dbReference>
<dbReference type="EMBL" id="AABR03086698">
    <property type="status" value="NOT_ANNOTATED_CDS"/>
    <property type="molecule type" value="Genomic_DNA"/>
</dbReference>
<dbReference type="EMBL" id="AABR03086915">
    <property type="status" value="NOT_ANNOTATED_CDS"/>
    <property type="molecule type" value="Genomic_DNA"/>
</dbReference>
<dbReference type="EMBL" id="AABR03087310">
    <property type="status" value="NOT_ANNOTATED_CDS"/>
    <property type="molecule type" value="Genomic_DNA"/>
</dbReference>
<dbReference type="EMBL" id="BN000870">
    <property type="protein sequence ID" value="CAJ55732.1"/>
    <property type="molecule type" value="mRNA"/>
</dbReference>
<dbReference type="RefSeq" id="NP_001041338.1">
    <property type="nucleotide sequence ID" value="NM_001047873.1"/>
</dbReference>
<dbReference type="SMR" id="Q0V8T4"/>
<dbReference type="FunCoup" id="Q0V8T4">
    <property type="interactions" value="27"/>
</dbReference>
<dbReference type="STRING" id="10116.ENSRNOP00000040012"/>
<dbReference type="GlyCosmos" id="Q0V8T4">
    <property type="glycosylation" value="5 sites, No reported glycans"/>
</dbReference>
<dbReference type="GlyGen" id="Q0V8T4">
    <property type="glycosylation" value="5 sites"/>
</dbReference>
<dbReference type="PhosphoSitePlus" id="Q0V8T4"/>
<dbReference type="PaxDb" id="10116-ENSRNOP00000040012"/>
<dbReference type="GeneID" id="301650"/>
<dbReference type="KEGG" id="rno:301650"/>
<dbReference type="UCSC" id="RGD:1565194">
    <property type="organism name" value="rat"/>
</dbReference>
<dbReference type="AGR" id="RGD:1565194"/>
<dbReference type="CTD" id="241175"/>
<dbReference type="eggNOG" id="KOG3516">
    <property type="taxonomic scope" value="Eukaryota"/>
</dbReference>
<dbReference type="InParanoid" id="Q0V8T4"/>
<dbReference type="OrthoDB" id="26719at2759"/>
<dbReference type="PhylomeDB" id="Q0V8T4"/>
<dbReference type="PRO" id="PR:Q0V8T4"/>
<dbReference type="Proteomes" id="UP000002494">
    <property type="component" value="Unplaced"/>
</dbReference>
<dbReference type="GO" id="GO:0005604">
    <property type="term" value="C:basement membrane"/>
    <property type="evidence" value="ECO:0007669"/>
    <property type="project" value="UniProtKB-ARBA"/>
</dbReference>
<dbReference type="GO" id="GO:0030054">
    <property type="term" value="C:cell junction"/>
    <property type="evidence" value="ECO:0007669"/>
    <property type="project" value="UniProtKB-ARBA"/>
</dbReference>
<dbReference type="GO" id="GO:0016020">
    <property type="term" value="C:membrane"/>
    <property type="evidence" value="ECO:0007669"/>
    <property type="project" value="UniProtKB-SubCell"/>
</dbReference>
<dbReference type="GO" id="GO:0005509">
    <property type="term" value="F:calcium ion binding"/>
    <property type="evidence" value="ECO:0007669"/>
    <property type="project" value="InterPro"/>
</dbReference>
<dbReference type="GO" id="GO:0007155">
    <property type="term" value="P:cell adhesion"/>
    <property type="evidence" value="ECO:0007669"/>
    <property type="project" value="UniProtKB-KW"/>
</dbReference>
<dbReference type="CDD" id="cd00054">
    <property type="entry name" value="EGF_CA"/>
    <property type="match status" value="2"/>
</dbReference>
<dbReference type="CDD" id="cd00057">
    <property type="entry name" value="FA58C"/>
    <property type="match status" value="1"/>
</dbReference>
<dbReference type="CDD" id="cd00110">
    <property type="entry name" value="LamG"/>
    <property type="match status" value="4"/>
</dbReference>
<dbReference type="FunFam" id="2.60.120.260:FF:000016">
    <property type="entry name" value="Contactin-associated protein-like 4 isoform 1"/>
    <property type="match status" value="1"/>
</dbReference>
<dbReference type="FunFam" id="2.60.120.200:FF:000026">
    <property type="entry name" value="contactin-associated protein-like 4 isoform X1"/>
    <property type="match status" value="1"/>
</dbReference>
<dbReference type="Gene3D" id="2.60.120.1000">
    <property type="match status" value="1"/>
</dbReference>
<dbReference type="Gene3D" id="2.60.120.200">
    <property type="match status" value="4"/>
</dbReference>
<dbReference type="Gene3D" id="2.60.120.260">
    <property type="entry name" value="Galactose-binding domain-like"/>
    <property type="match status" value="1"/>
</dbReference>
<dbReference type="Gene3D" id="2.10.25.10">
    <property type="entry name" value="Laminin"/>
    <property type="match status" value="1"/>
</dbReference>
<dbReference type="InterPro" id="IPR013320">
    <property type="entry name" value="ConA-like_dom_sf"/>
</dbReference>
<dbReference type="InterPro" id="IPR001881">
    <property type="entry name" value="EGF-like_Ca-bd_dom"/>
</dbReference>
<dbReference type="InterPro" id="IPR000742">
    <property type="entry name" value="EGF-like_dom"/>
</dbReference>
<dbReference type="InterPro" id="IPR000421">
    <property type="entry name" value="FA58C"/>
</dbReference>
<dbReference type="InterPro" id="IPR036056">
    <property type="entry name" value="Fibrinogen-like_C"/>
</dbReference>
<dbReference type="InterPro" id="IPR002181">
    <property type="entry name" value="Fibrinogen_a/b/g_C_dom"/>
</dbReference>
<dbReference type="InterPro" id="IPR008979">
    <property type="entry name" value="Galactose-bd-like_sf"/>
</dbReference>
<dbReference type="InterPro" id="IPR001791">
    <property type="entry name" value="Laminin_G"/>
</dbReference>
<dbReference type="InterPro" id="IPR050372">
    <property type="entry name" value="Neurexin-related_CASP"/>
</dbReference>
<dbReference type="PANTHER" id="PTHR15036:SF46">
    <property type="entry name" value="CONTACTIN-ASSOCIATED PROTEIN-LIKE 5"/>
    <property type="match status" value="1"/>
</dbReference>
<dbReference type="PANTHER" id="PTHR15036">
    <property type="entry name" value="PIKACHURIN-LIKE PROTEIN"/>
    <property type="match status" value="1"/>
</dbReference>
<dbReference type="Pfam" id="PF00008">
    <property type="entry name" value="EGF"/>
    <property type="match status" value="1"/>
</dbReference>
<dbReference type="Pfam" id="PF00754">
    <property type="entry name" value="F5_F8_type_C"/>
    <property type="match status" value="1"/>
</dbReference>
<dbReference type="Pfam" id="PF02210">
    <property type="entry name" value="Laminin_G_2"/>
    <property type="match status" value="4"/>
</dbReference>
<dbReference type="SMART" id="SM00181">
    <property type="entry name" value="EGF"/>
    <property type="match status" value="2"/>
</dbReference>
<dbReference type="SMART" id="SM00179">
    <property type="entry name" value="EGF_CA"/>
    <property type="match status" value="2"/>
</dbReference>
<dbReference type="SMART" id="SM00231">
    <property type="entry name" value="FA58C"/>
    <property type="match status" value="1"/>
</dbReference>
<dbReference type="SMART" id="SM00282">
    <property type="entry name" value="LamG"/>
    <property type="match status" value="4"/>
</dbReference>
<dbReference type="SUPFAM" id="SSF49899">
    <property type="entry name" value="Concanavalin A-like lectins/glucanases"/>
    <property type="match status" value="4"/>
</dbReference>
<dbReference type="SUPFAM" id="SSF57196">
    <property type="entry name" value="EGF/Laminin"/>
    <property type="match status" value="1"/>
</dbReference>
<dbReference type="SUPFAM" id="SSF56496">
    <property type="entry name" value="Fibrinogen C-terminal domain-like"/>
    <property type="match status" value="1"/>
</dbReference>
<dbReference type="SUPFAM" id="SSF49785">
    <property type="entry name" value="Galactose-binding domain-like"/>
    <property type="match status" value="1"/>
</dbReference>
<dbReference type="PROSITE" id="PS50026">
    <property type="entry name" value="EGF_3"/>
    <property type="match status" value="2"/>
</dbReference>
<dbReference type="PROSITE" id="PS01285">
    <property type="entry name" value="FA58C_1"/>
    <property type="match status" value="1"/>
</dbReference>
<dbReference type="PROSITE" id="PS01286">
    <property type="entry name" value="FA58C_2"/>
    <property type="match status" value="1"/>
</dbReference>
<dbReference type="PROSITE" id="PS50022">
    <property type="entry name" value="FA58C_3"/>
    <property type="match status" value="1"/>
</dbReference>
<dbReference type="PROSITE" id="PS51406">
    <property type="entry name" value="FIBRINOGEN_C_2"/>
    <property type="match status" value="1"/>
</dbReference>
<dbReference type="PROSITE" id="PS50025">
    <property type="entry name" value="LAM_G_DOMAIN"/>
    <property type="match status" value="4"/>
</dbReference>
<organism>
    <name type="scientific">Rattus norvegicus</name>
    <name type="common">Rat</name>
    <dbReference type="NCBI Taxonomy" id="10116"/>
    <lineage>
        <taxon>Eukaryota</taxon>
        <taxon>Metazoa</taxon>
        <taxon>Chordata</taxon>
        <taxon>Craniata</taxon>
        <taxon>Vertebrata</taxon>
        <taxon>Euteleostomi</taxon>
        <taxon>Mammalia</taxon>
        <taxon>Eutheria</taxon>
        <taxon>Euarchontoglires</taxon>
        <taxon>Glires</taxon>
        <taxon>Rodentia</taxon>
        <taxon>Myomorpha</taxon>
        <taxon>Muroidea</taxon>
        <taxon>Muridae</taxon>
        <taxon>Murinae</taxon>
        <taxon>Rattus</taxon>
    </lineage>
</organism>
<keyword id="KW-0130">Cell adhesion</keyword>
<keyword id="KW-1015">Disulfide bond</keyword>
<keyword id="KW-0245">EGF-like domain</keyword>
<keyword id="KW-0325">Glycoprotein</keyword>
<keyword id="KW-0472">Membrane</keyword>
<keyword id="KW-1185">Reference proteome</keyword>
<keyword id="KW-0677">Repeat</keyword>
<keyword id="KW-0732">Signal</keyword>
<keyword id="KW-0812">Transmembrane</keyword>
<keyword id="KW-1133">Transmembrane helix</keyword>
<feature type="signal peptide" evidence="2">
    <location>
        <begin position="1"/>
        <end position="24"/>
    </location>
</feature>
<feature type="chain" id="PRO_0000317383" description="Contactin-associated protein like 5-3">
    <location>
        <begin position="25"/>
        <end position="1307"/>
    </location>
</feature>
<feature type="topological domain" description="Extracellular" evidence="2">
    <location>
        <begin position="25"/>
        <end position="1238"/>
    </location>
</feature>
<feature type="transmembrane region" description="Helical" evidence="2">
    <location>
        <begin position="1239"/>
        <end position="1259"/>
    </location>
</feature>
<feature type="topological domain" description="Cytoplasmic" evidence="2">
    <location>
        <begin position="1260"/>
        <end position="1307"/>
    </location>
</feature>
<feature type="domain" description="F5/8 type C" evidence="4">
    <location>
        <begin position="31"/>
        <end position="175"/>
    </location>
</feature>
<feature type="domain" description="Laminin G-like 1" evidence="5">
    <location>
        <begin position="181"/>
        <end position="361"/>
    </location>
</feature>
<feature type="domain" description="Laminin G-like 2" evidence="5">
    <location>
        <begin position="368"/>
        <end position="545"/>
    </location>
</feature>
<feature type="domain" description="EGF-like 1" evidence="3">
    <location>
        <begin position="547"/>
        <end position="584"/>
    </location>
</feature>
<feature type="domain" description="Fibrinogen C-terminal" evidence="6">
    <location>
        <begin position="585"/>
        <end position="792"/>
    </location>
</feature>
<feature type="domain" description="Laminin G-like 3" evidence="5">
    <location>
        <begin position="793"/>
        <end position="958"/>
    </location>
</feature>
<feature type="domain" description="EGF-like 2" evidence="3">
    <location>
        <begin position="959"/>
        <end position="997"/>
    </location>
</feature>
<feature type="domain" description="Laminin G-like 4" evidence="5">
    <location>
        <begin position="1019"/>
        <end position="1200"/>
    </location>
</feature>
<feature type="glycosylation site" description="N-linked (GlcNAc...) asparagine" evidence="2">
    <location>
        <position position="283"/>
    </location>
</feature>
<feature type="glycosylation site" description="N-linked (GlcNAc...) asparagine" evidence="2">
    <location>
        <position position="497"/>
    </location>
</feature>
<feature type="glycosylation site" description="N-linked (GlcNAc...) asparagine" evidence="2">
    <location>
        <position position="600"/>
    </location>
</feature>
<feature type="glycosylation site" description="N-linked (GlcNAc...) asparagine" evidence="2">
    <location>
        <position position="624"/>
    </location>
</feature>
<feature type="glycosylation site" description="N-linked (GlcNAc...) asparagine" evidence="2">
    <location>
        <position position="637"/>
    </location>
</feature>
<feature type="disulfide bond" evidence="1">
    <location>
        <begin position="31"/>
        <end position="175"/>
    </location>
</feature>
<feature type="disulfide bond" evidence="1">
    <location>
        <begin position="330"/>
        <end position="361"/>
    </location>
</feature>
<feature type="disulfide bond" evidence="1">
    <location>
        <begin position="513"/>
        <end position="545"/>
    </location>
</feature>
<feature type="disulfide bond" evidence="1">
    <location>
        <begin position="551"/>
        <end position="562"/>
    </location>
</feature>
<feature type="disulfide bond" evidence="1">
    <location>
        <begin position="556"/>
        <end position="571"/>
    </location>
</feature>
<feature type="disulfide bond" evidence="1">
    <location>
        <begin position="573"/>
        <end position="583"/>
    </location>
</feature>
<feature type="disulfide bond" evidence="1">
    <location>
        <begin position="931"/>
        <end position="958"/>
    </location>
</feature>
<feature type="disulfide bond" evidence="1">
    <location>
        <begin position="962"/>
        <end position="975"/>
    </location>
</feature>
<feature type="disulfide bond" evidence="1">
    <location>
        <begin position="969"/>
        <end position="984"/>
    </location>
</feature>
<feature type="disulfide bond" evidence="1">
    <location>
        <begin position="986"/>
        <end position="996"/>
    </location>
</feature>
<feature type="disulfide bond" evidence="1">
    <location>
        <begin position="1165"/>
        <end position="1200"/>
    </location>
</feature>
<protein>
    <recommendedName>
        <fullName>Contactin-associated protein like 5-3</fullName>
    </recommendedName>
    <alternativeName>
        <fullName>Cell recognition molecule Caspr5-3</fullName>
    </alternativeName>
    <alternativeName>
        <fullName>Cell recognition molecule Caspr5c</fullName>
    </alternativeName>
    <alternativeName>
        <fullName>Contactin-associated protein-like 5c</fullName>
    </alternativeName>
</protein>
<accession>Q0V8T4</accession>
<proteinExistence type="evidence at transcript level"/>
<evidence type="ECO:0000250" key="1"/>
<evidence type="ECO:0000255" key="2"/>
<evidence type="ECO:0000255" key="3">
    <source>
        <dbReference type="PROSITE-ProRule" id="PRU00076"/>
    </source>
</evidence>
<evidence type="ECO:0000255" key="4">
    <source>
        <dbReference type="PROSITE-ProRule" id="PRU00081"/>
    </source>
</evidence>
<evidence type="ECO:0000255" key="5">
    <source>
        <dbReference type="PROSITE-ProRule" id="PRU00122"/>
    </source>
</evidence>
<evidence type="ECO:0000255" key="6">
    <source>
        <dbReference type="PROSITE-ProRule" id="PRU00739"/>
    </source>
</evidence>
<evidence type="ECO:0000305" key="7"/>
<gene>
    <name type="primary">Cntnap5c</name>
    <name type="synonym">Caspr5-3</name>
</gene>
<name>CTP5C_RAT</name>